<name>ASSY_SHEB9</name>
<gene>
    <name evidence="1" type="primary">argG</name>
    <name type="ordered locus">Sbal195_4210</name>
</gene>
<dbReference type="EC" id="6.3.4.5" evidence="1"/>
<dbReference type="EMBL" id="CP000891">
    <property type="protein sequence ID" value="ABX51368.1"/>
    <property type="molecule type" value="Genomic_DNA"/>
</dbReference>
<dbReference type="RefSeq" id="WP_012197752.1">
    <property type="nucleotide sequence ID" value="NC_009997.1"/>
</dbReference>
<dbReference type="SMR" id="A9KTY7"/>
<dbReference type="KEGG" id="sbn:Sbal195_4210"/>
<dbReference type="HOGENOM" id="CLU_032784_4_2_6"/>
<dbReference type="UniPathway" id="UPA00068">
    <property type="reaction ID" value="UER00113"/>
</dbReference>
<dbReference type="Proteomes" id="UP000000770">
    <property type="component" value="Chromosome"/>
</dbReference>
<dbReference type="GO" id="GO:0005737">
    <property type="term" value="C:cytoplasm"/>
    <property type="evidence" value="ECO:0007669"/>
    <property type="project" value="UniProtKB-SubCell"/>
</dbReference>
<dbReference type="GO" id="GO:0004055">
    <property type="term" value="F:argininosuccinate synthase activity"/>
    <property type="evidence" value="ECO:0007669"/>
    <property type="project" value="UniProtKB-UniRule"/>
</dbReference>
<dbReference type="GO" id="GO:0005524">
    <property type="term" value="F:ATP binding"/>
    <property type="evidence" value="ECO:0007669"/>
    <property type="project" value="UniProtKB-UniRule"/>
</dbReference>
<dbReference type="GO" id="GO:0000053">
    <property type="term" value="P:argininosuccinate metabolic process"/>
    <property type="evidence" value="ECO:0007669"/>
    <property type="project" value="TreeGrafter"/>
</dbReference>
<dbReference type="GO" id="GO:0006526">
    <property type="term" value="P:L-arginine biosynthetic process"/>
    <property type="evidence" value="ECO:0007669"/>
    <property type="project" value="UniProtKB-UniRule"/>
</dbReference>
<dbReference type="GO" id="GO:0000050">
    <property type="term" value="P:urea cycle"/>
    <property type="evidence" value="ECO:0007669"/>
    <property type="project" value="TreeGrafter"/>
</dbReference>
<dbReference type="CDD" id="cd01999">
    <property type="entry name" value="ASS"/>
    <property type="match status" value="1"/>
</dbReference>
<dbReference type="FunFam" id="1.20.5.470:FF:000005">
    <property type="entry name" value="Argininosuccinate synthase"/>
    <property type="match status" value="1"/>
</dbReference>
<dbReference type="FunFam" id="3.40.50.620:FF:000019">
    <property type="entry name" value="Argininosuccinate synthase"/>
    <property type="match status" value="1"/>
</dbReference>
<dbReference type="FunFam" id="3.90.1260.10:FF:000007">
    <property type="entry name" value="Argininosuccinate synthase"/>
    <property type="match status" value="1"/>
</dbReference>
<dbReference type="Gene3D" id="3.90.1260.10">
    <property type="entry name" value="Argininosuccinate synthetase, chain A, domain 2"/>
    <property type="match status" value="1"/>
</dbReference>
<dbReference type="Gene3D" id="3.40.50.620">
    <property type="entry name" value="HUPs"/>
    <property type="match status" value="1"/>
</dbReference>
<dbReference type="Gene3D" id="1.20.5.470">
    <property type="entry name" value="Single helix bin"/>
    <property type="match status" value="1"/>
</dbReference>
<dbReference type="HAMAP" id="MF_00005">
    <property type="entry name" value="Arg_succ_synth_type1"/>
    <property type="match status" value="1"/>
</dbReference>
<dbReference type="InterPro" id="IPR048268">
    <property type="entry name" value="Arginosuc_syn_C"/>
</dbReference>
<dbReference type="InterPro" id="IPR048267">
    <property type="entry name" value="Arginosuc_syn_N"/>
</dbReference>
<dbReference type="InterPro" id="IPR001518">
    <property type="entry name" value="Arginosuc_synth"/>
</dbReference>
<dbReference type="InterPro" id="IPR018223">
    <property type="entry name" value="Arginosuc_synth_CS"/>
</dbReference>
<dbReference type="InterPro" id="IPR023434">
    <property type="entry name" value="Arginosuc_synth_type_1_subfam"/>
</dbReference>
<dbReference type="InterPro" id="IPR024074">
    <property type="entry name" value="AS_cat/multimer_dom_body"/>
</dbReference>
<dbReference type="InterPro" id="IPR014729">
    <property type="entry name" value="Rossmann-like_a/b/a_fold"/>
</dbReference>
<dbReference type="NCBIfam" id="TIGR00032">
    <property type="entry name" value="argG"/>
    <property type="match status" value="1"/>
</dbReference>
<dbReference type="NCBIfam" id="NF001770">
    <property type="entry name" value="PRK00509.1"/>
    <property type="match status" value="1"/>
</dbReference>
<dbReference type="PANTHER" id="PTHR11587">
    <property type="entry name" value="ARGININOSUCCINATE SYNTHASE"/>
    <property type="match status" value="1"/>
</dbReference>
<dbReference type="PANTHER" id="PTHR11587:SF2">
    <property type="entry name" value="ARGININOSUCCINATE SYNTHASE"/>
    <property type="match status" value="1"/>
</dbReference>
<dbReference type="Pfam" id="PF20979">
    <property type="entry name" value="Arginosuc_syn_C"/>
    <property type="match status" value="1"/>
</dbReference>
<dbReference type="Pfam" id="PF00764">
    <property type="entry name" value="Arginosuc_synth"/>
    <property type="match status" value="1"/>
</dbReference>
<dbReference type="SUPFAM" id="SSF52402">
    <property type="entry name" value="Adenine nucleotide alpha hydrolases-like"/>
    <property type="match status" value="1"/>
</dbReference>
<dbReference type="SUPFAM" id="SSF69864">
    <property type="entry name" value="Argininosuccinate synthetase, C-terminal domain"/>
    <property type="match status" value="1"/>
</dbReference>
<dbReference type="PROSITE" id="PS00564">
    <property type="entry name" value="ARGININOSUCCIN_SYN_1"/>
    <property type="match status" value="1"/>
</dbReference>
<dbReference type="PROSITE" id="PS00565">
    <property type="entry name" value="ARGININOSUCCIN_SYN_2"/>
    <property type="match status" value="1"/>
</dbReference>
<comment type="catalytic activity">
    <reaction evidence="1">
        <text>L-citrulline + L-aspartate + ATP = 2-(N(omega)-L-arginino)succinate + AMP + diphosphate + H(+)</text>
        <dbReference type="Rhea" id="RHEA:10932"/>
        <dbReference type="ChEBI" id="CHEBI:15378"/>
        <dbReference type="ChEBI" id="CHEBI:29991"/>
        <dbReference type="ChEBI" id="CHEBI:30616"/>
        <dbReference type="ChEBI" id="CHEBI:33019"/>
        <dbReference type="ChEBI" id="CHEBI:57472"/>
        <dbReference type="ChEBI" id="CHEBI:57743"/>
        <dbReference type="ChEBI" id="CHEBI:456215"/>
        <dbReference type="EC" id="6.3.4.5"/>
    </reaction>
</comment>
<comment type="pathway">
    <text evidence="1">Amino-acid biosynthesis; L-arginine biosynthesis; L-arginine from L-ornithine and carbamoyl phosphate: step 2/3.</text>
</comment>
<comment type="subunit">
    <text evidence="1">Homotetramer.</text>
</comment>
<comment type="subcellular location">
    <subcellularLocation>
        <location evidence="1">Cytoplasm</location>
    </subcellularLocation>
</comment>
<comment type="similarity">
    <text evidence="1">Belongs to the argininosuccinate synthase family. Type 1 subfamily.</text>
</comment>
<feature type="chain" id="PRO_1000073829" description="Argininosuccinate synthase">
    <location>
        <begin position="1"/>
        <end position="412"/>
    </location>
</feature>
<feature type="binding site" evidence="1">
    <location>
        <begin position="16"/>
        <end position="24"/>
    </location>
    <ligand>
        <name>ATP</name>
        <dbReference type="ChEBI" id="CHEBI:30616"/>
    </ligand>
</feature>
<feature type="binding site" evidence="1">
    <location>
        <position position="44"/>
    </location>
    <ligand>
        <name>ATP</name>
        <dbReference type="ChEBI" id="CHEBI:30616"/>
    </ligand>
</feature>
<feature type="binding site" evidence="1">
    <location>
        <position position="96"/>
    </location>
    <ligand>
        <name>L-citrulline</name>
        <dbReference type="ChEBI" id="CHEBI:57743"/>
    </ligand>
</feature>
<feature type="binding site" evidence="1">
    <location>
        <position position="101"/>
    </location>
    <ligand>
        <name>L-citrulline</name>
        <dbReference type="ChEBI" id="CHEBI:57743"/>
    </ligand>
</feature>
<feature type="binding site" evidence="1">
    <location>
        <position position="126"/>
    </location>
    <ligand>
        <name>ATP</name>
        <dbReference type="ChEBI" id="CHEBI:30616"/>
    </ligand>
</feature>
<feature type="binding site" evidence="1">
    <location>
        <position position="128"/>
    </location>
    <ligand>
        <name>L-aspartate</name>
        <dbReference type="ChEBI" id="CHEBI:29991"/>
    </ligand>
</feature>
<feature type="binding site" evidence="1">
    <location>
        <position position="132"/>
    </location>
    <ligand>
        <name>L-aspartate</name>
        <dbReference type="ChEBI" id="CHEBI:29991"/>
    </ligand>
</feature>
<feature type="binding site" evidence="1">
    <location>
        <position position="132"/>
    </location>
    <ligand>
        <name>L-citrulline</name>
        <dbReference type="ChEBI" id="CHEBI:57743"/>
    </ligand>
</feature>
<feature type="binding site" evidence="1">
    <location>
        <position position="133"/>
    </location>
    <ligand>
        <name>L-aspartate</name>
        <dbReference type="ChEBI" id="CHEBI:29991"/>
    </ligand>
</feature>
<feature type="binding site" evidence="1">
    <location>
        <position position="136"/>
    </location>
    <ligand>
        <name>L-citrulline</name>
        <dbReference type="ChEBI" id="CHEBI:57743"/>
    </ligand>
</feature>
<feature type="binding site" evidence="1">
    <location>
        <position position="185"/>
    </location>
    <ligand>
        <name>L-citrulline</name>
        <dbReference type="ChEBI" id="CHEBI:57743"/>
    </ligand>
</feature>
<feature type="binding site" evidence="1">
    <location>
        <position position="194"/>
    </location>
    <ligand>
        <name>L-citrulline</name>
        <dbReference type="ChEBI" id="CHEBI:57743"/>
    </ligand>
</feature>
<feature type="binding site" evidence="1">
    <location>
        <position position="270"/>
    </location>
    <ligand>
        <name>L-citrulline</name>
        <dbReference type="ChEBI" id="CHEBI:57743"/>
    </ligand>
</feature>
<feature type="binding site" evidence="1">
    <location>
        <position position="282"/>
    </location>
    <ligand>
        <name>L-citrulline</name>
        <dbReference type="ChEBI" id="CHEBI:57743"/>
    </ligand>
</feature>
<sequence length="412" mass="45035">MSIEIKNTGVKKVVLAYSGGLDTSAIIPWLKENYDNCEIIAFCADVGQGEEELVGLTEKALASGASECHIVDLKEEFVKEYIYPTIASGAIYEGTYLLGTSMARPIIAKAQVEVARKVGADALCHGCTGKGNDQVRFEGCFAALAPDLKVIAPWREWTMQSREDLLAYLAERDIKTSASATKIYSRDANAFHISHEGGELEDPWNEPSKGVWTLTAAPEDAPNKPEYVSLEVEHGRITKVNGEALTPYAALMTLNAIAAPHGVGRIDITENRLVGMKSRGCYETPGGTVMFAALRAIEELVLDKTSRNWREQVAAQMAHLVYDGRWFTPLCKSLLAASESLAESVNGEVVVKLYKGQATAVKKRSPNSLYSEAFATFGEDQVYDQKHAEGFIRLYSLASRIRALNANDVKSK</sequence>
<accession>A9KTY7</accession>
<keyword id="KW-0028">Amino-acid biosynthesis</keyword>
<keyword id="KW-0055">Arginine biosynthesis</keyword>
<keyword id="KW-0067">ATP-binding</keyword>
<keyword id="KW-0963">Cytoplasm</keyword>
<keyword id="KW-0436">Ligase</keyword>
<keyword id="KW-0547">Nucleotide-binding</keyword>
<reference key="1">
    <citation type="submission" date="2007-11" db="EMBL/GenBank/DDBJ databases">
        <title>Complete sequence of chromosome of Shewanella baltica OS195.</title>
        <authorList>
            <consortium name="US DOE Joint Genome Institute"/>
            <person name="Copeland A."/>
            <person name="Lucas S."/>
            <person name="Lapidus A."/>
            <person name="Barry K."/>
            <person name="Glavina del Rio T."/>
            <person name="Dalin E."/>
            <person name="Tice H."/>
            <person name="Pitluck S."/>
            <person name="Chain P."/>
            <person name="Malfatti S."/>
            <person name="Shin M."/>
            <person name="Vergez L."/>
            <person name="Schmutz J."/>
            <person name="Larimer F."/>
            <person name="Land M."/>
            <person name="Hauser L."/>
            <person name="Kyrpides N."/>
            <person name="Kim E."/>
            <person name="Brettar I."/>
            <person name="Rodrigues J."/>
            <person name="Konstantinidis K."/>
            <person name="Klappenbach J."/>
            <person name="Hofle M."/>
            <person name="Tiedje J."/>
            <person name="Richardson P."/>
        </authorList>
    </citation>
    <scope>NUCLEOTIDE SEQUENCE [LARGE SCALE GENOMIC DNA]</scope>
    <source>
        <strain>OS195</strain>
    </source>
</reference>
<evidence type="ECO:0000255" key="1">
    <source>
        <dbReference type="HAMAP-Rule" id="MF_00005"/>
    </source>
</evidence>
<protein>
    <recommendedName>
        <fullName evidence="1">Argininosuccinate synthase</fullName>
        <ecNumber evidence="1">6.3.4.5</ecNumber>
    </recommendedName>
    <alternativeName>
        <fullName evidence="1">Citrulline--aspartate ligase</fullName>
    </alternativeName>
</protein>
<proteinExistence type="inferred from homology"/>
<organism>
    <name type="scientific">Shewanella baltica (strain OS195)</name>
    <dbReference type="NCBI Taxonomy" id="399599"/>
    <lineage>
        <taxon>Bacteria</taxon>
        <taxon>Pseudomonadati</taxon>
        <taxon>Pseudomonadota</taxon>
        <taxon>Gammaproteobacteria</taxon>
        <taxon>Alteromonadales</taxon>
        <taxon>Shewanellaceae</taxon>
        <taxon>Shewanella</taxon>
    </lineage>
</organism>